<protein>
    <recommendedName>
        <fullName evidence="1">Small, acid-soluble spore protein N</fullName>
        <shortName evidence="1">SASP N</shortName>
    </recommendedName>
</protein>
<organism>
    <name type="scientific">Bacillus cereus (strain ATCC 10987 / NRS 248)</name>
    <dbReference type="NCBI Taxonomy" id="222523"/>
    <lineage>
        <taxon>Bacteria</taxon>
        <taxon>Bacillati</taxon>
        <taxon>Bacillota</taxon>
        <taxon>Bacilli</taxon>
        <taxon>Bacillales</taxon>
        <taxon>Bacillaceae</taxon>
        <taxon>Bacillus</taxon>
        <taxon>Bacillus cereus group</taxon>
    </lineage>
</organism>
<proteinExistence type="inferred from homology"/>
<reference key="1">
    <citation type="journal article" date="2004" name="Nucleic Acids Res.">
        <title>The genome sequence of Bacillus cereus ATCC 10987 reveals metabolic adaptations and a large plasmid related to Bacillus anthracis pXO1.</title>
        <authorList>
            <person name="Rasko D.A."/>
            <person name="Ravel J."/>
            <person name="Oekstad O.A."/>
            <person name="Helgason E."/>
            <person name="Cer R.Z."/>
            <person name="Jiang L."/>
            <person name="Shores K.A."/>
            <person name="Fouts D.E."/>
            <person name="Tourasse N.J."/>
            <person name="Angiuoli S.V."/>
            <person name="Kolonay J.F."/>
            <person name="Nelson W.C."/>
            <person name="Kolstoe A.-B."/>
            <person name="Fraser C.M."/>
            <person name="Read T.D."/>
        </authorList>
    </citation>
    <scope>NUCLEOTIDE SEQUENCE [LARGE SCALE GENOMIC DNA]</scope>
    <source>
        <strain>ATCC 10987 / NRS 248</strain>
    </source>
</reference>
<sequence length="44" mass="4681">MGNPKKNSKDFAPNHIGTQSKKAGGNKGKQMQDQTGKQPIVDNG</sequence>
<dbReference type="EMBL" id="AE017194">
    <property type="protein sequence ID" value="AAS42534.1"/>
    <property type="molecule type" value="Genomic_DNA"/>
</dbReference>
<dbReference type="KEGG" id="bca:BCE_3629"/>
<dbReference type="HOGENOM" id="CLU_216714_0_0_9"/>
<dbReference type="Proteomes" id="UP000002527">
    <property type="component" value="Chromosome"/>
</dbReference>
<dbReference type="GO" id="GO:0042601">
    <property type="term" value="C:endospore-forming forespore"/>
    <property type="evidence" value="ECO:0007669"/>
    <property type="project" value="InterPro"/>
</dbReference>
<dbReference type="GO" id="GO:0030436">
    <property type="term" value="P:asexual sporulation"/>
    <property type="evidence" value="ECO:0007669"/>
    <property type="project" value="UniProtKB-UniRule"/>
</dbReference>
<dbReference type="GO" id="GO:0030435">
    <property type="term" value="P:sporulation resulting in formation of a cellular spore"/>
    <property type="evidence" value="ECO:0007669"/>
    <property type="project" value="UniProtKB-KW"/>
</dbReference>
<dbReference type="HAMAP" id="MF_01505">
    <property type="entry name" value="SspN"/>
    <property type="match status" value="1"/>
</dbReference>
<dbReference type="InterPro" id="IPR012612">
    <property type="entry name" value="SASP_SspN"/>
</dbReference>
<dbReference type="NCBIfam" id="NF006904">
    <property type="entry name" value="PRK09398.1"/>
    <property type="match status" value="1"/>
</dbReference>
<dbReference type="Pfam" id="PF08177">
    <property type="entry name" value="SspN"/>
    <property type="match status" value="1"/>
</dbReference>
<evidence type="ECO:0000255" key="1">
    <source>
        <dbReference type="HAMAP-Rule" id="MF_01505"/>
    </source>
</evidence>
<evidence type="ECO:0000256" key="2">
    <source>
        <dbReference type="SAM" id="MobiDB-lite"/>
    </source>
</evidence>
<comment type="subcellular location">
    <subcellularLocation>
        <location evidence="1">Spore core</location>
    </subcellularLocation>
</comment>
<comment type="induction">
    <text evidence="1">Expressed only in the forespore compartment of sporulating cells.</text>
</comment>
<comment type="similarity">
    <text evidence="1">Belongs to the SspN family.</text>
</comment>
<keyword id="KW-0749">Sporulation</keyword>
<accession>Q733M9</accession>
<gene>
    <name evidence="1" type="primary">sspN</name>
    <name type="ordered locus">BCE_3629</name>
</gene>
<feature type="chain" id="PRO_0000221467" description="Small, acid-soluble spore protein N">
    <location>
        <begin position="1"/>
        <end position="44"/>
    </location>
</feature>
<feature type="region of interest" description="Disordered" evidence="2">
    <location>
        <begin position="1"/>
        <end position="44"/>
    </location>
</feature>
<name>SSPN_BACC1</name>